<comment type="function">
    <text evidence="1">Plays a major role in protein secretion by helping the post-translocational extracellular folding of several secreted proteins.</text>
</comment>
<comment type="catalytic activity">
    <reaction evidence="1">
        <text>[protein]-peptidylproline (omega=180) = [protein]-peptidylproline (omega=0)</text>
        <dbReference type="Rhea" id="RHEA:16237"/>
        <dbReference type="Rhea" id="RHEA-COMP:10747"/>
        <dbReference type="Rhea" id="RHEA-COMP:10748"/>
        <dbReference type="ChEBI" id="CHEBI:83833"/>
        <dbReference type="ChEBI" id="CHEBI:83834"/>
        <dbReference type="EC" id="5.2.1.8"/>
    </reaction>
</comment>
<comment type="subcellular location">
    <subcellularLocation>
        <location evidence="1">Cell membrane</location>
        <topology evidence="1">Lipid-anchor</topology>
    </subcellularLocation>
</comment>
<comment type="similarity">
    <text evidence="1">Belongs to the PrsA family.</text>
</comment>
<sequence>MKKKLLSVAAVASVFTLAACGSNDEAVINYKGGEVNKADVQDEAYQKAGAQIAFQQTMNKLLEKEYGKKVTDKEVEAEVKKTKDQFPDKEQFNTTLQTAGIKNEKEFEKVLRTQMLLKEAKSAKSKVTDKEIEDRFNQEKVEVKASHILVEKESEAKAIKKQLDEGGDFAKIAKAKSTDTGSATKGGDLGYFTKGKMVEEFENYAFKDGVEGKISDPIKTQFGYHIIKVTDRKEKKDFTLEKESDRIKKALAEEKSAQVNPNDIYRSLMKKYDVKVENKDFKDAFDLDKQEQQQMQQQMQQQQQ</sequence>
<name>PRSA_EXIS2</name>
<reference key="1">
    <citation type="submission" date="2008-04" db="EMBL/GenBank/DDBJ databases">
        <title>Complete sequence of chromosome of Exiguobacterium sibiricum 255-15.</title>
        <authorList>
            <consortium name="US DOE Joint Genome Institute"/>
            <person name="Copeland A."/>
            <person name="Lucas S."/>
            <person name="Lapidus A."/>
            <person name="Glavina del Rio T."/>
            <person name="Dalin E."/>
            <person name="Tice H."/>
            <person name="Bruce D."/>
            <person name="Goodwin L."/>
            <person name="Pitluck S."/>
            <person name="Kiss H."/>
            <person name="Chertkov O."/>
            <person name="Monk C."/>
            <person name="Brettin T."/>
            <person name="Detter J.C."/>
            <person name="Han C."/>
            <person name="Kuske C.R."/>
            <person name="Schmutz J."/>
            <person name="Larimer F."/>
            <person name="Land M."/>
            <person name="Hauser L."/>
            <person name="Kyrpides N."/>
            <person name="Mikhailova N."/>
            <person name="Vishnivetskaya T."/>
            <person name="Rodrigues D.F."/>
            <person name="Gilichinsky D."/>
            <person name="Tiedje J."/>
            <person name="Richardson P."/>
        </authorList>
    </citation>
    <scope>NUCLEOTIDE SEQUENCE [LARGE SCALE GENOMIC DNA]</scope>
    <source>
        <strain>DSM 17290 / CCUG 55495 / CIP 109462 / JCM 13490 / 255-15</strain>
    </source>
</reference>
<protein>
    <recommendedName>
        <fullName evidence="1">Foldase protein PrsA</fullName>
        <ecNumber evidence="1">5.2.1.8</ecNumber>
    </recommendedName>
</protein>
<keyword id="KW-1003">Cell membrane</keyword>
<keyword id="KW-0413">Isomerase</keyword>
<keyword id="KW-0449">Lipoprotein</keyword>
<keyword id="KW-0472">Membrane</keyword>
<keyword id="KW-0564">Palmitate</keyword>
<keyword id="KW-1185">Reference proteome</keyword>
<keyword id="KW-0697">Rotamase</keyword>
<keyword id="KW-0732">Signal</keyword>
<evidence type="ECO:0000255" key="1">
    <source>
        <dbReference type="HAMAP-Rule" id="MF_01145"/>
    </source>
</evidence>
<evidence type="ECO:0000256" key="2">
    <source>
        <dbReference type="SAM" id="MobiDB-lite"/>
    </source>
</evidence>
<feature type="signal peptide" evidence="1">
    <location>
        <begin position="1"/>
        <end position="19"/>
    </location>
</feature>
<feature type="chain" id="PRO_1000213648" description="Foldase protein PrsA">
    <location>
        <begin position="20"/>
        <end position="304"/>
    </location>
</feature>
<feature type="domain" description="PpiC" evidence="1">
    <location>
        <begin position="140"/>
        <end position="231"/>
    </location>
</feature>
<feature type="region of interest" description="Disordered" evidence="2">
    <location>
        <begin position="285"/>
        <end position="304"/>
    </location>
</feature>
<feature type="compositionally biased region" description="Low complexity" evidence="2">
    <location>
        <begin position="292"/>
        <end position="304"/>
    </location>
</feature>
<feature type="lipid moiety-binding region" description="N-palmitoyl cysteine" evidence="1">
    <location>
        <position position="20"/>
    </location>
</feature>
<feature type="lipid moiety-binding region" description="S-diacylglycerol cysteine" evidence="1">
    <location>
        <position position="20"/>
    </location>
</feature>
<dbReference type="EC" id="5.2.1.8" evidence="1"/>
<dbReference type="EMBL" id="CP001022">
    <property type="protein sequence ID" value="ACB60168.1"/>
    <property type="molecule type" value="Genomic_DNA"/>
</dbReference>
<dbReference type="RefSeq" id="WP_012369592.1">
    <property type="nucleotide sequence ID" value="NC_010556.1"/>
</dbReference>
<dbReference type="SMR" id="B1YK87"/>
<dbReference type="STRING" id="262543.Exig_0687"/>
<dbReference type="KEGG" id="esi:Exig_0687"/>
<dbReference type="eggNOG" id="COG0760">
    <property type="taxonomic scope" value="Bacteria"/>
</dbReference>
<dbReference type="HOGENOM" id="CLU_034646_6_1_9"/>
<dbReference type="OrthoDB" id="14196at2"/>
<dbReference type="Proteomes" id="UP000001681">
    <property type="component" value="Chromosome"/>
</dbReference>
<dbReference type="GO" id="GO:0005886">
    <property type="term" value="C:plasma membrane"/>
    <property type="evidence" value="ECO:0007669"/>
    <property type="project" value="UniProtKB-SubCell"/>
</dbReference>
<dbReference type="GO" id="GO:0003755">
    <property type="term" value="F:peptidyl-prolyl cis-trans isomerase activity"/>
    <property type="evidence" value="ECO:0007669"/>
    <property type="project" value="UniProtKB-UniRule"/>
</dbReference>
<dbReference type="GO" id="GO:0006457">
    <property type="term" value="P:protein folding"/>
    <property type="evidence" value="ECO:0007669"/>
    <property type="project" value="UniProtKB-UniRule"/>
</dbReference>
<dbReference type="Gene3D" id="3.10.50.40">
    <property type="match status" value="1"/>
</dbReference>
<dbReference type="HAMAP" id="MF_01145">
    <property type="entry name" value="Foldase_PrsA"/>
    <property type="match status" value="1"/>
</dbReference>
<dbReference type="InterPro" id="IPR023059">
    <property type="entry name" value="Foldase_PrsA"/>
</dbReference>
<dbReference type="InterPro" id="IPR046357">
    <property type="entry name" value="PPIase_dom_sf"/>
</dbReference>
<dbReference type="InterPro" id="IPR000297">
    <property type="entry name" value="PPIase_PpiC"/>
</dbReference>
<dbReference type="InterPro" id="IPR050245">
    <property type="entry name" value="PrsA_foldase"/>
</dbReference>
<dbReference type="InterPro" id="IPR027304">
    <property type="entry name" value="Trigger_fact/SurA_dom_sf"/>
</dbReference>
<dbReference type="PANTHER" id="PTHR47245:SF1">
    <property type="entry name" value="FOLDASE PROTEIN PRSA"/>
    <property type="match status" value="1"/>
</dbReference>
<dbReference type="PANTHER" id="PTHR47245">
    <property type="entry name" value="PEPTIDYLPROLYL ISOMERASE"/>
    <property type="match status" value="1"/>
</dbReference>
<dbReference type="Pfam" id="PF13616">
    <property type="entry name" value="Rotamase_3"/>
    <property type="match status" value="1"/>
</dbReference>
<dbReference type="SUPFAM" id="SSF54534">
    <property type="entry name" value="FKBP-like"/>
    <property type="match status" value="1"/>
</dbReference>
<dbReference type="SUPFAM" id="SSF109998">
    <property type="entry name" value="Triger factor/SurA peptide-binding domain-like"/>
    <property type="match status" value="1"/>
</dbReference>
<dbReference type="PROSITE" id="PS50198">
    <property type="entry name" value="PPIC_PPIASE_2"/>
    <property type="match status" value="1"/>
</dbReference>
<dbReference type="PROSITE" id="PS51257">
    <property type="entry name" value="PROKAR_LIPOPROTEIN"/>
    <property type="match status" value="1"/>
</dbReference>
<gene>
    <name evidence="1" type="primary">prsA</name>
    <name type="ordered locus">Exig_0687</name>
</gene>
<accession>B1YK87</accession>
<proteinExistence type="inferred from homology"/>
<organism>
    <name type="scientific">Exiguobacterium sibiricum (strain DSM 17290 / CCUG 55495 / CIP 109462 / JCM 13490 / 255-15)</name>
    <dbReference type="NCBI Taxonomy" id="262543"/>
    <lineage>
        <taxon>Bacteria</taxon>
        <taxon>Bacillati</taxon>
        <taxon>Bacillota</taxon>
        <taxon>Bacilli</taxon>
        <taxon>Bacillales</taxon>
        <taxon>Bacillales Family XII. Incertae Sedis</taxon>
        <taxon>Exiguobacterium</taxon>
    </lineage>
</organism>